<name>BIOB_STAA3</name>
<comment type="function">
    <text evidence="1">Catalyzes the conversion of dethiobiotin (DTB) to biotin by the insertion of a sulfur atom into dethiobiotin via a radical-based mechanism.</text>
</comment>
<comment type="catalytic activity">
    <reaction evidence="1">
        <text>(4R,5S)-dethiobiotin + (sulfur carrier)-SH + 2 reduced [2Fe-2S]-[ferredoxin] + 2 S-adenosyl-L-methionine = (sulfur carrier)-H + biotin + 2 5'-deoxyadenosine + 2 L-methionine + 2 oxidized [2Fe-2S]-[ferredoxin]</text>
        <dbReference type="Rhea" id="RHEA:22060"/>
        <dbReference type="Rhea" id="RHEA-COMP:10000"/>
        <dbReference type="Rhea" id="RHEA-COMP:10001"/>
        <dbReference type="Rhea" id="RHEA-COMP:14737"/>
        <dbReference type="Rhea" id="RHEA-COMP:14739"/>
        <dbReference type="ChEBI" id="CHEBI:17319"/>
        <dbReference type="ChEBI" id="CHEBI:29917"/>
        <dbReference type="ChEBI" id="CHEBI:33737"/>
        <dbReference type="ChEBI" id="CHEBI:33738"/>
        <dbReference type="ChEBI" id="CHEBI:57586"/>
        <dbReference type="ChEBI" id="CHEBI:57844"/>
        <dbReference type="ChEBI" id="CHEBI:59789"/>
        <dbReference type="ChEBI" id="CHEBI:64428"/>
        <dbReference type="ChEBI" id="CHEBI:149473"/>
        <dbReference type="EC" id="2.8.1.6"/>
    </reaction>
</comment>
<comment type="cofactor">
    <cofactor evidence="1">
        <name>[4Fe-4S] cluster</name>
        <dbReference type="ChEBI" id="CHEBI:49883"/>
    </cofactor>
    <text evidence="1">Binds 1 [4Fe-4S] cluster. The cluster is coordinated with 3 cysteines and an exchangeable S-adenosyl-L-methionine.</text>
</comment>
<comment type="cofactor">
    <cofactor evidence="1">
        <name>[2Fe-2S] cluster</name>
        <dbReference type="ChEBI" id="CHEBI:190135"/>
    </cofactor>
    <text evidence="1">Binds 1 [2Fe-2S] cluster. The cluster is coordinated with 3 cysteines and 1 arginine.</text>
</comment>
<comment type="pathway">
    <text evidence="1">Cofactor biosynthesis; biotin biosynthesis; biotin from 7,8-diaminononanoate: step 2/2.</text>
</comment>
<comment type="subunit">
    <text evidence="1">Homodimer.</text>
</comment>
<comment type="similarity">
    <text evidence="1">Belongs to the radical SAM superfamily. Biotin synthase family.</text>
</comment>
<protein>
    <recommendedName>
        <fullName evidence="1">Biotin synthase</fullName>
        <ecNumber evidence="1">2.8.1.6</ecNumber>
    </recommendedName>
</protein>
<accession>Q2FE72</accession>
<reference key="1">
    <citation type="journal article" date="2006" name="Lancet">
        <title>Complete genome sequence of USA300, an epidemic clone of community-acquired meticillin-resistant Staphylococcus aureus.</title>
        <authorList>
            <person name="Diep B.A."/>
            <person name="Gill S.R."/>
            <person name="Chang R.F."/>
            <person name="Phan T.H."/>
            <person name="Chen J.H."/>
            <person name="Davidson M.G."/>
            <person name="Lin F."/>
            <person name="Lin J."/>
            <person name="Carleton H.A."/>
            <person name="Mongodin E.F."/>
            <person name="Sensabaugh G.F."/>
            <person name="Perdreau-Remington F."/>
        </authorList>
    </citation>
    <scope>NUCLEOTIDE SEQUENCE [LARGE SCALE GENOMIC DNA]</scope>
    <source>
        <strain>USA300</strain>
    </source>
</reference>
<proteinExistence type="inferred from homology"/>
<evidence type="ECO:0000255" key="1">
    <source>
        <dbReference type="HAMAP-Rule" id="MF_01694"/>
    </source>
</evidence>
<evidence type="ECO:0000255" key="2">
    <source>
        <dbReference type="PROSITE-ProRule" id="PRU01266"/>
    </source>
</evidence>
<dbReference type="EC" id="2.8.1.6" evidence="1"/>
<dbReference type="EMBL" id="CP000255">
    <property type="protein sequence ID" value="ABD21418.1"/>
    <property type="molecule type" value="Genomic_DNA"/>
</dbReference>
<dbReference type="RefSeq" id="WP_001046646.1">
    <property type="nucleotide sequence ID" value="NZ_CP027476.1"/>
</dbReference>
<dbReference type="SMR" id="Q2FE72"/>
<dbReference type="KEGG" id="saa:SAUSA300_2371"/>
<dbReference type="HOGENOM" id="CLU_033172_2_1_9"/>
<dbReference type="OMA" id="NICTTHT"/>
<dbReference type="UniPathway" id="UPA00078">
    <property type="reaction ID" value="UER00162"/>
</dbReference>
<dbReference type="Proteomes" id="UP000001939">
    <property type="component" value="Chromosome"/>
</dbReference>
<dbReference type="GO" id="GO:0051537">
    <property type="term" value="F:2 iron, 2 sulfur cluster binding"/>
    <property type="evidence" value="ECO:0007669"/>
    <property type="project" value="UniProtKB-KW"/>
</dbReference>
<dbReference type="GO" id="GO:0051539">
    <property type="term" value="F:4 iron, 4 sulfur cluster binding"/>
    <property type="evidence" value="ECO:0007669"/>
    <property type="project" value="UniProtKB-KW"/>
</dbReference>
<dbReference type="GO" id="GO:0004076">
    <property type="term" value="F:biotin synthase activity"/>
    <property type="evidence" value="ECO:0007669"/>
    <property type="project" value="UniProtKB-UniRule"/>
</dbReference>
<dbReference type="GO" id="GO:0005506">
    <property type="term" value="F:iron ion binding"/>
    <property type="evidence" value="ECO:0007669"/>
    <property type="project" value="UniProtKB-UniRule"/>
</dbReference>
<dbReference type="GO" id="GO:0009102">
    <property type="term" value="P:biotin biosynthetic process"/>
    <property type="evidence" value="ECO:0007669"/>
    <property type="project" value="UniProtKB-UniRule"/>
</dbReference>
<dbReference type="CDD" id="cd01335">
    <property type="entry name" value="Radical_SAM"/>
    <property type="match status" value="1"/>
</dbReference>
<dbReference type="FunFam" id="3.20.20.70:FF:000026">
    <property type="entry name" value="Biotin synthase"/>
    <property type="match status" value="1"/>
</dbReference>
<dbReference type="Gene3D" id="3.20.20.70">
    <property type="entry name" value="Aldolase class I"/>
    <property type="match status" value="1"/>
</dbReference>
<dbReference type="HAMAP" id="MF_01694">
    <property type="entry name" value="BioB"/>
    <property type="match status" value="1"/>
</dbReference>
<dbReference type="InterPro" id="IPR013785">
    <property type="entry name" value="Aldolase_TIM"/>
</dbReference>
<dbReference type="InterPro" id="IPR010722">
    <property type="entry name" value="BATS_dom"/>
</dbReference>
<dbReference type="InterPro" id="IPR002684">
    <property type="entry name" value="Biotin_synth/BioAB"/>
</dbReference>
<dbReference type="InterPro" id="IPR024177">
    <property type="entry name" value="Biotin_synthase"/>
</dbReference>
<dbReference type="InterPro" id="IPR006638">
    <property type="entry name" value="Elp3/MiaA/NifB-like_rSAM"/>
</dbReference>
<dbReference type="InterPro" id="IPR007197">
    <property type="entry name" value="rSAM"/>
</dbReference>
<dbReference type="NCBIfam" id="TIGR00433">
    <property type="entry name" value="bioB"/>
    <property type="match status" value="1"/>
</dbReference>
<dbReference type="PANTHER" id="PTHR22976">
    <property type="entry name" value="BIOTIN SYNTHASE"/>
    <property type="match status" value="1"/>
</dbReference>
<dbReference type="PANTHER" id="PTHR22976:SF2">
    <property type="entry name" value="BIOTIN SYNTHASE, MITOCHONDRIAL"/>
    <property type="match status" value="1"/>
</dbReference>
<dbReference type="Pfam" id="PF06968">
    <property type="entry name" value="BATS"/>
    <property type="match status" value="1"/>
</dbReference>
<dbReference type="Pfam" id="PF04055">
    <property type="entry name" value="Radical_SAM"/>
    <property type="match status" value="1"/>
</dbReference>
<dbReference type="PIRSF" id="PIRSF001619">
    <property type="entry name" value="Biotin_synth"/>
    <property type="match status" value="1"/>
</dbReference>
<dbReference type="SFLD" id="SFLDG01060">
    <property type="entry name" value="BATS_domain_containing"/>
    <property type="match status" value="1"/>
</dbReference>
<dbReference type="SFLD" id="SFLDG01278">
    <property type="entry name" value="biotin_synthase_like"/>
    <property type="match status" value="1"/>
</dbReference>
<dbReference type="SMART" id="SM00876">
    <property type="entry name" value="BATS"/>
    <property type="match status" value="1"/>
</dbReference>
<dbReference type="SMART" id="SM00729">
    <property type="entry name" value="Elp3"/>
    <property type="match status" value="1"/>
</dbReference>
<dbReference type="SUPFAM" id="SSF102114">
    <property type="entry name" value="Radical SAM enzymes"/>
    <property type="match status" value="1"/>
</dbReference>
<dbReference type="PROSITE" id="PS51918">
    <property type="entry name" value="RADICAL_SAM"/>
    <property type="match status" value="1"/>
</dbReference>
<feature type="chain" id="PRO_0000381644" description="Biotin synthase">
    <location>
        <begin position="1"/>
        <end position="335"/>
    </location>
</feature>
<feature type="domain" description="Radical SAM core" evidence="2">
    <location>
        <begin position="43"/>
        <end position="269"/>
    </location>
</feature>
<feature type="binding site" evidence="1">
    <location>
        <position position="61"/>
    </location>
    <ligand>
        <name>[4Fe-4S] cluster</name>
        <dbReference type="ChEBI" id="CHEBI:49883"/>
        <note>4Fe-4S-S-AdoMet</note>
    </ligand>
</feature>
<feature type="binding site" evidence="1">
    <location>
        <position position="65"/>
    </location>
    <ligand>
        <name>[4Fe-4S] cluster</name>
        <dbReference type="ChEBI" id="CHEBI:49883"/>
        <note>4Fe-4S-S-AdoMet</note>
    </ligand>
</feature>
<feature type="binding site" evidence="1">
    <location>
        <position position="68"/>
    </location>
    <ligand>
        <name>[4Fe-4S] cluster</name>
        <dbReference type="ChEBI" id="CHEBI:49883"/>
        <note>4Fe-4S-S-AdoMet</note>
    </ligand>
</feature>
<feature type="binding site" evidence="1">
    <location>
        <position position="104"/>
    </location>
    <ligand>
        <name>[2Fe-2S] cluster</name>
        <dbReference type="ChEBI" id="CHEBI:190135"/>
    </ligand>
</feature>
<feature type="binding site" evidence="1">
    <location>
        <position position="137"/>
    </location>
    <ligand>
        <name>[2Fe-2S] cluster</name>
        <dbReference type="ChEBI" id="CHEBI:190135"/>
    </ligand>
</feature>
<feature type="binding site" evidence="1">
    <location>
        <position position="197"/>
    </location>
    <ligand>
        <name>[2Fe-2S] cluster</name>
        <dbReference type="ChEBI" id="CHEBI:190135"/>
    </ligand>
</feature>
<feature type="binding site" evidence="1">
    <location>
        <position position="267"/>
    </location>
    <ligand>
        <name>[2Fe-2S] cluster</name>
        <dbReference type="ChEBI" id="CHEBI:190135"/>
    </ligand>
</feature>
<gene>
    <name evidence="1" type="primary">bioB</name>
    <name type="ordered locus">SAUSA300_2371</name>
</gene>
<keyword id="KW-0001">2Fe-2S</keyword>
<keyword id="KW-0004">4Fe-4S</keyword>
<keyword id="KW-0093">Biotin biosynthesis</keyword>
<keyword id="KW-0408">Iron</keyword>
<keyword id="KW-0411">Iron-sulfur</keyword>
<keyword id="KW-0479">Metal-binding</keyword>
<keyword id="KW-0949">S-adenosyl-L-methionine</keyword>
<keyword id="KW-0808">Transferase</keyword>
<organism>
    <name type="scientific">Staphylococcus aureus (strain USA300)</name>
    <dbReference type="NCBI Taxonomy" id="367830"/>
    <lineage>
        <taxon>Bacteria</taxon>
        <taxon>Bacillati</taxon>
        <taxon>Bacillota</taxon>
        <taxon>Bacilli</taxon>
        <taxon>Bacillales</taxon>
        <taxon>Staphylococcaceae</taxon>
        <taxon>Staphylococcus</taxon>
    </lineage>
</organism>
<sequence length="335" mass="37559">MNLAKRILQGEQLTKETVLKIYEDTNIDTLDLLNEAYILRKHYFGKKVKLNMILNAKSGICPENCGYCGQSRDIKQKQRYALIPEEQIIDGAKVAHDNHIGTYCIVMSGRGPSDKEVDHISNTVRTIKSQHPQLKICACLGLTNDEQAKKLKSAGVDRYNHNINTSENYHDNVVTTHSYKDRTDTIELMKANNISPCSGVICGMGESNQDIVDMAFALKEMDADSIPINFLHPIKGTKFGSMDDLTPMKCLRIVALFRLINPTKEIRIAGGREVNLRSLQPLALKAANSIFVGDYLITGGQPNQLDYDMINDLGFEIDYDTCENKENKNEVSRAN</sequence>